<comment type="function">
    <text evidence="2">Required for the early stage of chloroplast development. May be involved in chloroplast protein biosynthesis and/or degradation.</text>
</comment>
<comment type="subcellular location">
    <subcellularLocation>
        <location evidence="2">Plastid</location>
        <location evidence="2">Chloroplast</location>
    </subcellularLocation>
    <text evidence="2">Accumulates as spots in the chloroplast.</text>
</comment>
<comment type="tissue specificity">
    <text evidence="2">Ubiquitous. Preferentially expressed in newly formed green tissues.</text>
</comment>
<proteinExistence type="evidence at protein level"/>
<organism evidence="6">
    <name type="scientific">Arabidopsis thaliana</name>
    <name type="common">Mouse-ear cress</name>
    <dbReference type="NCBI Taxonomy" id="3702"/>
    <lineage>
        <taxon>Eukaryota</taxon>
        <taxon>Viridiplantae</taxon>
        <taxon>Streptophyta</taxon>
        <taxon>Embryophyta</taxon>
        <taxon>Tracheophyta</taxon>
        <taxon>Spermatophyta</taxon>
        <taxon>Magnoliopsida</taxon>
        <taxon>eudicotyledons</taxon>
        <taxon>Gunneridae</taxon>
        <taxon>Pentapetalae</taxon>
        <taxon>rosids</taxon>
        <taxon>malvids</taxon>
        <taxon>Brassicales</taxon>
        <taxon>Brassicaceae</taxon>
        <taxon>Camelineae</taxon>
        <taxon>Arabidopsis</taxon>
    </lineage>
</organism>
<sequence>MISSLSASSSLVSSFVAVKATPVTGPLIPRRDLLSIRIRASSNQNSSGYCFPEKFKSFAKSAILIGAAVSMTGKFSTLPVKAESPVTTIEKTYEEVKEEKLSEITPLSELLDSTPEAVETLRSLLQQKLEKGEDEEALKLLERLVAAQPEETEWKFLMARLLGEMGRPENARQMFEEILQRNPLSFEALFENALLMDRSGEGNAVLQRLEDALAVAEAEYLVKEARDVRLIIAQIHFLQKNVDEALKSYEQLTKEDPKDFRPYFCRGMIYSLLDKNVEAKEQFAKYRELSPKKFEVEGYLRTPLSKMKLFGGSEEN</sequence>
<name>SG1_ARATH</name>
<accession>Q9LS48</accession>
<reference key="1">
    <citation type="journal article" date="2000" name="DNA Res.">
        <title>Structural analysis of Arabidopsis thaliana chromosome 3. I. Sequence features of the regions of 4,504,864 bp covered by sixty P1 and TAC clones.</title>
        <authorList>
            <person name="Sato S."/>
            <person name="Nakamura Y."/>
            <person name="Kaneko T."/>
            <person name="Katoh T."/>
            <person name="Asamizu E."/>
            <person name="Tabata S."/>
        </authorList>
    </citation>
    <scope>NUCLEOTIDE SEQUENCE [LARGE SCALE GENOMIC DNA]</scope>
    <source>
        <strain>cv. Columbia</strain>
    </source>
</reference>
<reference key="2">
    <citation type="journal article" date="2017" name="Plant J.">
        <title>Araport11: a complete reannotation of the Arabidopsis thaliana reference genome.</title>
        <authorList>
            <person name="Cheng C.Y."/>
            <person name="Krishnakumar V."/>
            <person name="Chan A.P."/>
            <person name="Thibaud-Nissen F."/>
            <person name="Schobel S."/>
            <person name="Town C.D."/>
        </authorList>
    </citation>
    <scope>GENOME REANNOTATION</scope>
    <source>
        <strain>cv. Columbia</strain>
    </source>
</reference>
<reference key="3">
    <citation type="journal article" date="2003" name="Science">
        <title>Empirical analysis of transcriptional activity in the Arabidopsis genome.</title>
        <authorList>
            <person name="Yamada K."/>
            <person name="Lim J."/>
            <person name="Dale J.M."/>
            <person name="Chen H."/>
            <person name="Shinn P."/>
            <person name="Palm C.J."/>
            <person name="Southwick A.M."/>
            <person name="Wu H.C."/>
            <person name="Kim C.J."/>
            <person name="Nguyen M."/>
            <person name="Pham P.K."/>
            <person name="Cheuk R.F."/>
            <person name="Karlin-Newmann G."/>
            <person name="Liu S.X."/>
            <person name="Lam B."/>
            <person name="Sakano H."/>
            <person name="Wu T."/>
            <person name="Yu G."/>
            <person name="Miranda M."/>
            <person name="Quach H.L."/>
            <person name="Tripp M."/>
            <person name="Chang C.H."/>
            <person name="Lee J.M."/>
            <person name="Toriumi M.J."/>
            <person name="Chan M.M."/>
            <person name="Tang C.C."/>
            <person name="Onodera C.S."/>
            <person name="Deng J.M."/>
            <person name="Akiyama K."/>
            <person name="Ansari Y."/>
            <person name="Arakawa T."/>
            <person name="Banh J."/>
            <person name="Banno F."/>
            <person name="Bowser L."/>
            <person name="Brooks S.Y."/>
            <person name="Carninci P."/>
            <person name="Chao Q."/>
            <person name="Choy N."/>
            <person name="Enju A."/>
            <person name="Goldsmith A.D."/>
            <person name="Gurjal M."/>
            <person name="Hansen N.F."/>
            <person name="Hayashizaki Y."/>
            <person name="Johnson-Hopson C."/>
            <person name="Hsuan V.W."/>
            <person name="Iida K."/>
            <person name="Karnes M."/>
            <person name="Khan S."/>
            <person name="Koesema E."/>
            <person name="Ishida J."/>
            <person name="Jiang P.X."/>
            <person name="Jones T."/>
            <person name="Kawai J."/>
            <person name="Kamiya A."/>
            <person name="Meyers C."/>
            <person name="Nakajima M."/>
            <person name="Narusaka M."/>
            <person name="Seki M."/>
            <person name="Sakurai T."/>
            <person name="Satou M."/>
            <person name="Tamse R."/>
            <person name="Vaysberg M."/>
            <person name="Wallender E.K."/>
            <person name="Wong C."/>
            <person name="Yamamura Y."/>
            <person name="Yuan S."/>
            <person name="Shinozaki K."/>
            <person name="Davis R.W."/>
            <person name="Theologis A."/>
            <person name="Ecker J.R."/>
        </authorList>
    </citation>
    <scope>NUCLEOTIDE SEQUENCE [LARGE SCALE MRNA]</scope>
    <source>
        <strain>cv. Columbia</strain>
    </source>
</reference>
<reference key="4">
    <citation type="submission" date="2002-03" db="EMBL/GenBank/DDBJ databases">
        <title>Full-length cDNA from Arabidopsis thaliana.</title>
        <authorList>
            <person name="Brover V.V."/>
            <person name="Troukhan M.E."/>
            <person name="Alexandrov N.A."/>
            <person name="Lu Y.-P."/>
            <person name="Flavell R.B."/>
            <person name="Feldmann K.A."/>
        </authorList>
    </citation>
    <scope>NUCLEOTIDE SEQUENCE [LARGE SCALE MRNA]</scope>
</reference>
<reference key="5">
    <citation type="journal article" date="2014" name="J. Exp. Bot.">
        <title>The tetratricopeptide repeat-containing protein slow green1 is required for chloroplast development in Arabidopsis.</title>
        <authorList>
            <person name="Hu Z."/>
            <person name="Xu F."/>
            <person name="Guan L."/>
            <person name="Qian P."/>
            <person name="Liu Y."/>
            <person name="Zhang H."/>
            <person name="Huang Y."/>
            <person name="Hou S."/>
        </authorList>
    </citation>
    <scope>FUNCTION</scope>
    <scope>MUTAGENESIS OF ARG-181</scope>
    <scope>SUBCELLULAR LOCATION</scope>
    <scope>TISSUE SPECIFICITY</scope>
    <source>
        <strain>cv. Columbia</strain>
    </source>
</reference>
<keyword id="KW-0150">Chloroplast</keyword>
<keyword id="KW-0934">Plastid</keyword>
<keyword id="KW-1185">Reference proteome</keyword>
<keyword id="KW-0677">Repeat</keyword>
<keyword id="KW-0802">TPR repeat</keyword>
<keyword id="KW-0809">Transit peptide</keyword>
<gene>
    <name evidence="3" type="primary">SG1</name>
    <name evidence="4" type="ordered locus">At3g18420</name>
    <name evidence="5" type="ORF">MYF24.13</name>
</gene>
<feature type="transit peptide" description="Chloroplast" evidence="1">
    <location>
        <begin position="1"/>
        <end position="39"/>
    </location>
</feature>
<feature type="chain" id="PRO_0000431588" description="protein SLOW GREEN 1, chloroplastic" evidence="1">
    <location>
        <begin position="40"/>
        <end position="316"/>
    </location>
</feature>
<feature type="repeat" description="TPR 1" evidence="1">
    <location>
        <begin position="118"/>
        <end position="151"/>
    </location>
</feature>
<feature type="repeat" description="TPR 2" evidence="1">
    <location>
        <begin position="152"/>
        <end position="185"/>
    </location>
</feature>
<feature type="repeat" description="TPR 3" evidence="1">
    <location>
        <begin position="226"/>
        <end position="259"/>
    </location>
</feature>
<feature type="repeat" description="TPR 4" evidence="1">
    <location>
        <begin position="261"/>
        <end position="293"/>
    </location>
</feature>
<feature type="mutagenesis site" description="Abnormal chloroplast development and slow greening." evidence="2">
    <original>R</original>
    <variation>K</variation>
    <location>
        <position position="181"/>
    </location>
</feature>
<evidence type="ECO:0000255" key="1"/>
<evidence type="ECO:0000269" key="2">
    <source>
    </source>
</evidence>
<evidence type="ECO:0000303" key="3">
    <source>
    </source>
</evidence>
<evidence type="ECO:0000312" key="4">
    <source>
        <dbReference type="Araport" id="AT3G18420"/>
    </source>
</evidence>
<evidence type="ECO:0000312" key="5">
    <source>
        <dbReference type="EMBL" id="BAB01108.1"/>
    </source>
</evidence>
<evidence type="ECO:0000312" key="6">
    <source>
        <dbReference type="Proteomes" id="UP000006548"/>
    </source>
</evidence>
<protein>
    <recommendedName>
        <fullName evidence="3">protein SLOW GREEN 1, chloroplastic</fullName>
    </recommendedName>
</protein>
<dbReference type="EMBL" id="AB026658">
    <property type="protein sequence ID" value="BAB01108.1"/>
    <property type="molecule type" value="Genomic_DNA"/>
</dbReference>
<dbReference type="EMBL" id="CP002686">
    <property type="protein sequence ID" value="AEE76095.1"/>
    <property type="molecule type" value="Genomic_DNA"/>
</dbReference>
<dbReference type="EMBL" id="AY037258">
    <property type="protein sequence ID" value="AAK59859.1"/>
    <property type="molecule type" value="mRNA"/>
</dbReference>
<dbReference type="EMBL" id="AY077665">
    <property type="protein sequence ID" value="AAL76143.1"/>
    <property type="molecule type" value="mRNA"/>
</dbReference>
<dbReference type="EMBL" id="AY086309">
    <property type="protein sequence ID" value="AAM64381.1"/>
    <property type="molecule type" value="mRNA"/>
</dbReference>
<dbReference type="RefSeq" id="NP_566609.1">
    <property type="nucleotide sequence ID" value="NM_112727.2"/>
</dbReference>
<dbReference type="SMR" id="Q9LS48"/>
<dbReference type="FunCoup" id="Q9LS48">
    <property type="interactions" value="332"/>
</dbReference>
<dbReference type="STRING" id="3702.Q9LS48"/>
<dbReference type="iPTMnet" id="Q9LS48"/>
<dbReference type="PaxDb" id="3702-AT3G18420.1"/>
<dbReference type="ProteomicsDB" id="234490"/>
<dbReference type="EnsemblPlants" id="AT3G18420.1">
    <property type="protein sequence ID" value="AT3G18420.1"/>
    <property type="gene ID" value="AT3G18420"/>
</dbReference>
<dbReference type="GeneID" id="821371"/>
<dbReference type="Gramene" id="AT3G18420.1">
    <property type="protein sequence ID" value="AT3G18420.1"/>
    <property type="gene ID" value="AT3G18420"/>
</dbReference>
<dbReference type="KEGG" id="ath:AT3G18420"/>
<dbReference type="Araport" id="AT3G18420"/>
<dbReference type="TAIR" id="AT3G18420">
    <property type="gene designation" value="SG1"/>
</dbReference>
<dbReference type="eggNOG" id="ENOG502QVER">
    <property type="taxonomic scope" value="Eukaryota"/>
</dbReference>
<dbReference type="HOGENOM" id="CLU_044919_1_0_1"/>
<dbReference type="InParanoid" id="Q9LS48"/>
<dbReference type="OMA" id="SQPRNRW"/>
<dbReference type="OrthoDB" id="1856606at2759"/>
<dbReference type="PhylomeDB" id="Q9LS48"/>
<dbReference type="PRO" id="PR:Q9LS48"/>
<dbReference type="Proteomes" id="UP000006548">
    <property type="component" value="Chromosome 3"/>
</dbReference>
<dbReference type="ExpressionAtlas" id="Q9LS48">
    <property type="expression patterns" value="baseline and differential"/>
</dbReference>
<dbReference type="GO" id="GO:0009507">
    <property type="term" value="C:chloroplast"/>
    <property type="evidence" value="ECO:0000314"/>
    <property type="project" value="UniProtKB"/>
</dbReference>
<dbReference type="GO" id="GO:0009941">
    <property type="term" value="C:chloroplast envelope"/>
    <property type="evidence" value="ECO:0007005"/>
    <property type="project" value="TAIR"/>
</dbReference>
<dbReference type="GO" id="GO:0005829">
    <property type="term" value="C:cytosol"/>
    <property type="evidence" value="ECO:0007005"/>
    <property type="project" value="TAIR"/>
</dbReference>
<dbReference type="GO" id="GO:0009536">
    <property type="term" value="C:plastid"/>
    <property type="evidence" value="ECO:0007005"/>
    <property type="project" value="TAIR"/>
</dbReference>
<dbReference type="GO" id="GO:0009658">
    <property type="term" value="P:chloroplast organization"/>
    <property type="evidence" value="ECO:0000315"/>
    <property type="project" value="UniProtKB"/>
</dbReference>
<dbReference type="FunFam" id="1.25.40.10:FF:000660">
    <property type="entry name" value="Protein SLOW GREEN 1, chloroplastic"/>
    <property type="match status" value="1"/>
</dbReference>
<dbReference type="Gene3D" id="1.25.40.10">
    <property type="entry name" value="Tetratricopeptide repeat domain"/>
    <property type="match status" value="2"/>
</dbReference>
<dbReference type="InterPro" id="IPR011990">
    <property type="entry name" value="TPR-like_helical_dom_sf"/>
</dbReference>
<dbReference type="InterPro" id="IPR019734">
    <property type="entry name" value="TPR_rpt"/>
</dbReference>
<dbReference type="InterPro" id="IPR051685">
    <property type="entry name" value="Ycf3/AcsC/BcsC/TPR_MFPF"/>
</dbReference>
<dbReference type="PANTHER" id="PTHR44943">
    <property type="entry name" value="CELLULOSE SYNTHASE OPERON PROTEIN C"/>
    <property type="match status" value="1"/>
</dbReference>
<dbReference type="PANTHER" id="PTHR44943:SF4">
    <property type="entry name" value="TPR REPEAT-CONTAINING PROTEIN MJ0798"/>
    <property type="match status" value="1"/>
</dbReference>
<dbReference type="Pfam" id="PF13432">
    <property type="entry name" value="TPR_16"/>
    <property type="match status" value="2"/>
</dbReference>
<dbReference type="SMART" id="SM00028">
    <property type="entry name" value="TPR"/>
    <property type="match status" value="3"/>
</dbReference>
<dbReference type="SUPFAM" id="SSF48452">
    <property type="entry name" value="TPR-like"/>
    <property type="match status" value="1"/>
</dbReference>
<dbReference type="PROSITE" id="PS50005">
    <property type="entry name" value="TPR"/>
    <property type="match status" value="4"/>
</dbReference>
<dbReference type="PROSITE" id="PS50293">
    <property type="entry name" value="TPR_REGION"/>
    <property type="match status" value="1"/>
</dbReference>